<keyword id="KW-0025">Alternative splicing</keyword>
<keyword id="KW-0130">Cell adhesion</keyword>
<keyword id="KW-0903">Direct protein sequencing</keyword>
<keyword id="KW-1015">Disulfide bond</keyword>
<keyword id="KW-0325">Glycoprotein</keyword>
<keyword id="KW-0472">Membrane</keyword>
<keyword id="KW-0597">Phosphoprotein</keyword>
<keyword id="KW-0654">Proteoglycan</keyword>
<keyword id="KW-1267">Proteomics identification</keyword>
<keyword id="KW-1185">Reference proteome</keyword>
<keyword id="KW-0730">Sialic acid</keyword>
<keyword id="KW-0732">Signal</keyword>
<keyword id="KW-0765">Sulfation</keyword>
<keyword id="KW-0812">Transmembrane</keyword>
<keyword id="KW-1133">Transmembrane helix</keyword>
<protein>
    <recommendedName>
        <fullName>Podocalyxin-like protein 2</fullName>
    </recommendedName>
    <alternativeName>
        <fullName>Endoglycan</fullName>
    </alternativeName>
</protein>
<sequence length="605" mass="65076">MGRLLRAARLPPLLSPLLLLLVGGAFLGACVAGSDEPGPEGLTSTSLLDLLLPTGLEPLDSEEPSETMGLGAGLGAPGSGFPSEENEESRILQPPQYFWEEEEELNDSSLDLGPTADYVFPDLTEKAGSIEDTSQAQELPNLPSPLPKMNLVEPPWHMPPREEEEEEEEEEEREKEEVEKQEEEEEEELLPVNGSQEEAKPQVRDFSLTSSSQTPGATKSRHEDSGDQASSGVEVESSMGPSLLLPSVTPTTVTPGDQDSTSQEAEATVLPAAGLGVEFEAPQEASEEATAGAAGLSGQHEEVPALPSFPQTTAPSGAEHPDEDPLGSRTSASSPLAPGDMELTPSSATLGQEDLNQQLLEGQAAEAQSRIPWDSTQVICKDWSNLAGKNYIILNMTENIDCEVFRQHRGPQLLALVEEVLPRHGSGHHGAWHISLSKPSEKEQHLLMTLVGEQGVVPTQDVLSMLGDIRRSLEEIGIQNYSTTSSCQARASQVRSDYGTLFVVLVVIGAICIIIIALGLLYNCWQRRLPKLKHVSHGEELRFVENGCHDNPTLDVASDSQSEMQEKHPSLNGGGALNGPGSWGALMGGKRDPEDSDVFEEDTHL</sequence>
<comment type="function">
    <text evidence="5">Acts as a ligand for vascular selectins. Mediates rapid rolling of leukocytes over vascular surfaces through high affinity divalent cation-dependent interactions with E-, P- and L-selectins.</text>
</comment>
<comment type="subunit">
    <text evidence="4 5">Homodimer; disulfide-linked. Interacts with SELL, SELE and SELP.</text>
</comment>
<comment type="interaction">
    <interactant intactId="EBI-25887738">
        <id>Q9NZ53-2</id>
    </interactant>
    <interactant intactId="EBI-2432309">
        <id>Q92876</id>
        <label>KLK6</label>
    </interactant>
    <organismsDiffer>false</organismsDiffer>
    <experiments>3</experiments>
</comment>
<comment type="subcellular location">
    <subcellularLocation>
        <location evidence="8">Membrane</location>
        <topology evidence="8">Single-pass type I membrane protein</topology>
    </subcellularLocation>
</comment>
<comment type="alternative products">
    <event type="alternative splicing"/>
    <isoform>
        <id>Q9NZ53-1</id>
        <name>1</name>
        <sequence type="displayed"/>
    </isoform>
    <isoform>
        <id>Q9NZ53-2</id>
        <name>2</name>
        <sequence type="described" ref="VSP_020876"/>
    </isoform>
</comment>
<comment type="tissue specificity">
    <text evidence="3 5">Expressed in T-cells, B-cells and monocytes. Expression is higher on memory and germinal center cells than on naive B-cells (at protein level). Highly expressed in brain. Moderately expressed in pancreas, kidney and lymphoid node. Weakly expressed in liver. Detected in both endothelial cells and CD34+ bone marrow cells.</text>
</comment>
<comment type="PTM">
    <text evidence="3 4">O-glycosylated; contains chondroitin sulfate. Displays sialylated O-linked oligosaccharides.</text>
</comment>
<comment type="PTM">
    <text evidence="4">Sulfation is necessary for interaction with SELL. Sialylated O-linked oligosaccharides are necessary for interaction with SELL, SELE and SELP.</text>
</comment>
<comment type="similarity">
    <text evidence="8">Belongs to the podocalyxin family.</text>
</comment>
<name>PDXL2_HUMAN</name>
<accession>Q9NZ53</accession>
<accession>Q6UVY4</accession>
<accession>Q8WUV6</accession>
<dbReference type="EMBL" id="AF219137">
    <property type="protein sequence ID" value="AAF44629.1"/>
    <property type="molecule type" value="mRNA"/>
</dbReference>
<dbReference type="EMBL" id="AY359096">
    <property type="protein sequence ID" value="AAQ89454.1"/>
    <property type="molecule type" value="mRNA"/>
</dbReference>
<dbReference type="EMBL" id="BC019330">
    <property type="protein sequence ID" value="AAH19330.1"/>
    <property type="molecule type" value="mRNA"/>
</dbReference>
<dbReference type="EMBL" id="BC052585">
    <property type="protein sequence ID" value="AAH52585.1"/>
    <property type="molecule type" value="mRNA"/>
</dbReference>
<dbReference type="CCDS" id="CCDS3044.1">
    <molecule id="Q9NZ53-1"/>
</dbReference>
<dbReference type="RefSeq" id="NP_056535.1">
    <molecule id="Q9NZ53-1"/>
    <property type="nucleotide sequence ID" value="NM_015720.4"/>
</dbReference>
<dbReference type="SMR" id="Q9NZ53"/>
<dbReference type="BioGRID" id="119082">
    <property type="interactions" value="65"/>
</dbReference>
<dbReference type="FunCoup" id="Q9NZ53">
    <property type="interactions" value="656"/>
</dbReference>
<dbReference type="IntAct" id="Q9NZ53">
    <property type="interactions" value="37"/>
</dbReference>
<dbReference type="STRING" id="9606.ENSP00000345359"/>
<dbReference type="GlyConnect" id="687">
    <property type="glycosylation" value="1 O-Linked glycan (1 site)"/>
</dbReference>
<dbReference type="GlyCosmos" id="Q9NZ53">
    <property type="glycosylation" value="6 sites, 3 glycans"/>
</dbReference>
<dbReference type="GlyGen" id="Q9NZ53">
    <property type="glycosylation" value="21 sites, 3 N-linked glycans (3 sites), 5 O-linked glycans (13 sites)"/>
</dbReference>
<dbReference type="iPTMnet" id="Q9NZ53"/>
<dbReference type="PhosphoSitePlus" id="Q9NZ53"/>
<dbReference type="SwissPalm" id="Q9NZ53"/>
<dbReference type="BioMuta" id="PODXL2"/>
<dbReference type="DMDM" id="74734719"/>
<dbReference type="jPOST" id="Q9NZ53"/>
<dbReference type="MassIVE" id="Q9NZ53"/>
<dbReference type="PaxDb" id="9606-ENSP00000345359"/>
<dbReference type="PeptideAtlas" id="Q9NZ53"/>
<dbReference type="ProteomicsDB" id="83326">
    <molecule id="Q9NZ53-1"/>
</dbReference>
<dbReference type="ProteomicsDB" id="83327">
    <molecule id="Q9NZ53-2"/>
</dbReference>
<dbReference type="Pumba" id="Q9NZ53"/>
<dbReference type="Antibodypedia" id="46650">
    <property type="antibodies" value="272 antibodies from 30 providers"/>
</dbReference>
<dbReference type="DNASU" id="50512"/>
<dbReference type="Ensembl" id="ENST00000342480.7">
    <molecule id="Q9NZ53-1"/>
    <property type="protein sequence ID" value="ENSP00000345359.6"/>
    <property type="gene ID" value="ENSG00000114631.11"/>
</dbReference>
<dbReference type="GeneID" id="50512"/>
<dbReference type="KEGG" id="hsa:50512"/>
<dbReference type="MANE-Select" id="ENST00000342480.7">
    <property type="protein sequence ID" value="ENSP00000345359.6"/>
    <property type="RefSeq nucleotide sequence ID" value="NM_015720.4"/>
    <property type="RefSeq protein sequence ID" value="NP_056535.1"/>
</dbReference>
<dbReference type="UCSC" id="uc003ejq.4">
    <molecule id="Q9NZ53-1"/>
    <property type="organism name" value="human"/>
</dbReference>
<dbReference type="AGR" id="HGNC:17936"/>
<dbReference type="CTD" id="50512"/>
<dbReference type="DisGeNET" id="50512"/>
<dbReference type="GeneCards" id="PODXL2"/>
<dbReference type="HGNC" id="HGNC:17936">
    <property type="gene designation" value="PODXL2"/>
</dbReference>
<dbReference type="HPA" id="ENSG00000114631">
    <property type="expression patterns" value="Tissue enhanced (brain, pituitary gland)"/>
</dbReference>
<dbReference type="MIM" id="616627">
    <property type="type" value="gene"/>
</dbReference>
<dbReference type="neXtProt" id="NX_Q9NZ53"/>
<dbReference type="OpenTargets" id="ENSG00000114631"/>
<dbReference type="PharmGKB" id="PA134860950"/>
<dbReference type="VEuPathDB" id="HostDB:ENSG00000114631"/>
<dbReference type="eggNOG" id="ENOG502QTNA">
    <property type="taxonomic scope" value="Eukaryota"/>
</dbReference>
<dbReference type="GeneTree" id="ENSGT00730000111323"/>
<dbReference type="HOGENOM" id="CLU_039299_0_0_1"/>
<dbReference type="InParanoid" id="Q9NZ53"/>
<dbReference type="OMA" id="WHMPPEE"/>
<dbReference type="OrthoDB" id="6352820at2759"/>
<dbReference type="PAN-GO" id="Q9NZ53">
    <property type="GO annotations" value="1 GO annotation based on evolutionary models"/>
</dbReference>
<dbReference type="PhylomeDB" id="Q9NZ53"/>
<dbReference type="TreeFam" id="TF333564"/>
<dbReference type="PathwayCommons" id="Q9NZ53"/>
<dbReference type="Reactome" id="R-HSA-156584">
    <property type="pathway name" value="Cytosolic sulfonation of small molecules"/>
</dbReference>
<dbReference type="SignaLink" id="Q9NZ53"/>
<dbReference type="BioGRID-ORCS" id="50512">
    <property type="hits" value="10 hits in 1159 CRISPR screens"/>
</dbReference>
<dbReference type="ChiTaRS" id="PODXL2">
    <property type="organism name" value="human"/>
</dbReference>
<dbReference type="GenomeRNAi" id="50512"/>
<dbReference type="Pharos" id="Q9NZ53">
    <property type="development level" value="Tbio"/>
</dbReference>
<dbReference type="PRO" id="PR:Q9NZ53"/>
<dbReference type="Proteomes" id="UP000005640">
    <property type="component" value="Chromosome 3"/>
</dbReference>
<dbReference type="RNAct" id="Q9NZ53">
    <property type="molecule type" value="protein"/>
</dbReference>
<dbReference type="Bgee" id="ENSG00000114631">
    <property type="expression patterns" value="Expressed in cortical plate and 99 other cell types or tissues"/>
</dbReference>
<dbReference type="GO" id="GO:0005796">
    <property type="term" value="C:Golgi lumen"/>
    <property type="evidence" value="ECO:0000304"/>
    <property type="project" value="Reactome"/>
</dbReference>
<dbReference type="GO" id="GO:0005886">
    <property type="term" value="C:plasma membrane"/>
    <property type="evidence" value="ECO:0000304"/>
    <property type="project" value="ProtInc"/>
</dbReference>
<dbReference type="GO" id="GO:0005539">
    <property type="term" value="F:glycosaminoglycan binding"/>
    <property type="evidence" value="ECO:0000304"/>
    <property type="project" value="ProtInc"/>
</dbReference>
<dbReference type="GO" id="GO:0050901">
    <property type="term" value="P:leukocyte tethering or rolling"/>
    <property type="evidence" value="ECO:0000314"/>
    <property type="project" value="UniProtKB"/>
</dbReference>
<dbReference type="InterPro" id="IPR013836">
    <property type="entry name" value="CD34/Podocalyxin"/>
</dbReference>
<dbReference type="InterPro" id="IPR042397">
    <property type="entry name" value="PODXL2"/>
</dbReference>
<dbReference type="PANTHER" id="PTHR15594">
    <property type="entry name" value="PODOCALYXIN-LIKE PROTEIN 2"/>
    <property type="match status" value="1"/>
</dbReference>
<dbReference type="PANTHER" id="PTHR15594:SF1">
    <property type="entry name" value="PODOCALYXIN-LIKE PROTEIN 2"/>
    <property type="match status" value="1"/>
</dbReference>
<dbReference type="Pfam" id="PF06365">
    <property type="entry name" value="CD34_antigen"/>
    <property type="match status" value="1"/>
</dbReference>
<proteinExistence type="evidence at protein level"/>
<feature type="signal peptide" evidence="3">
    <location>
        <begin position="1"/>
        <end position="32"/>
    </location>
</feature>
<feature type="chain" id="PRO_0000252129" description="Podocalyxin-like protein 2">
    <location>
        <begin position="33"/>
        <end position="605"/>
    </location>
</feature>
<feature type="topological domain" description="Extracellular" evidence="1">
    <location>
        <begin position="33"/>
        <end position="500"/>
    </location>
</feature>
<feature type="transmembrane region" description="Helical" evidence="1">
    <location>
        <begin position="501"/>
        <end position="521"/>
    </location>
</feature>
<feature type="topological domain" description="Cytoplasmic" evidence="1">
    <location>
        <begin position="522"/>
        <end position="605"/>
    </location>
</feature>
<feature type="region of interest" description="Disordered" evidence="2">
    <location>
        <begin position="129"/>
        <end position="347"/>
    </location>
</feature>
<feature type="region of interest" description="O-glycosylated at one site">
    <location>
        <begin position="129"/>
        <end position="134"/>
    </location>
</feature>
<feature type="region of interest" description="Disordered" evidence="2">
    <location>
        <begin position="554"/>
        <end position="605"/>
    </location>
</feature>
<feature type="compositionally biased region" description="Acidic residues" evidence="2">
    <location>
        <begin position="162"/>
        <end position="189"/>
    </location>
</feature>
<feature type="compositionally biased region" description="Polar residues" evidence="2">
    <location>
        <begin position="207"/>
        <end position="217"/>
    </location>
</feature>
<feature type="compositionally biased region" description="Low complexity" evidence="2">
    <location>
        <begin position="241"/>
        <end position="255"/>
    </location>
</feature>
<feature type="compositionally biased region" description="Low complexity" evidence="2">
    <location>
        <begin position="288"/>
        <end position="298"/>
    </location>
</feature>
<feature type="compositionally biased region" description="Gly residues" evidence="2">
    <location>
        <begin position="572"/>
        <end position="582"/>
    </location>
</feature>
<feature type="compositionally biased region" description="Acidic residues" evidence="2">
    <location>
        <begin position="594"/>
        <end position="605"/>
    </location>
</feature>
<feature type="modified residue" description="Sulfotyrosine" evidence="4">
    <location>
        <position position="97"/>
    </location>
</feature>
<feature type="modified residue" description="Sulfotyrosine" evidence="4">
    <location>
        <position position="118"/>
    </location>
</feature>
<feature type="modified residue" description="Phosphoserine" evidence="11">
    <location>
        <position position="570"/>
    </location>
</feature>
<feature type="modified residue" description="Phosphoserine" evidence="9 10 11 12">
    <location>
        <position position="596"/>
    </location>
</feature>
<feature type="glycosylation site" description="O-linked (Xyl...) (chondroitin sulfate) serine" evidence="4">
    <location>
        <position position="79"/>
    </location>
</feature>
<feature type="glycosylation site" description="O-linked (GalNAc...) serine" evidence="6">
    <location>
        <position position="144"/>
    </location>
</feature>
<feature type="glycosylation site" description="N-linked (GlcNAc...) asparagine" evidence="1">
    <location>
        <position position="193"/>
    </location>
</feature>
<feature type="glycosylation site" description="N-linked (GlcNAc...) asparagine" evidence="1">
    <location>
        <position position="395"/>
    </location>
</feature>
<feature type="splice variant" id="VSP_020876" description="In isoform 2." evidence="7">
    <location>
        <begin position="336"/>
        <end position="411"/>
    </location>
</feature>
<feature type="sequence variant" id="VAR_053599" description="In dbSNP:rs34117815.">
    <original>V</original>
    <variation>A</variation>
    <location>
        <position position="456"/>
    </location>
</feature>
<feature type="mutagenesis site" description="Remains sulfated. Not sulfated and reduced rolling of Jurkat T-cells by more than 50%; when associated with F-118. The rolling of Jurkat T-cells is reduced by more than 80%; when associated with F-118 and A-124." evidence="4">
    <original>Y</original>
    <variation>F</variation>
    <location>
        <position position="97"/>
    </location>
</feature>
<feature type="mutagenesis site" description="Remains sulfated. Not sulfated and reduced rolling of Jurkat T-cells by more than 50%; when associated with F-97. The rolling of Jurkat T-cells is reduced by more than 80%; when associated with F-97 and A-124." evidence="4">
    <original>Y</original>
    <variation>F</variation>
    <location>
        <position position="118"/>
    </location>
</feature>
<feature type="mutagenesis site" description="Reduced sialylation." evidence="4">
    <original>T</original>
    <variation>A</variation>
    <location>
        <position position="124"/>
    </location>
</feature>
<feature type="sequence conflict" description="In Ref. 2; AAQ89454." evidence="8" ref="2">
    <original>P</original>
    <variation>S</variation>
    <location>
        <position position="77"/>
    </location>
</feature>
<reference key="1">
    <citation type="journal article" date="2000" name="J. Biol. Chem.">
        <title>Identification of endoglycan, a member of the CD34/podocalyxin family of sialomucins.</title>
        <authorList>
            <person name="Sassetti C."/>
            <person name="Van Zante A."/>
            <person name="Rosen S.D."/>
        </authorList>
    </citation>
    <scope>NUCLEOTIDE SEQUENCE [MRNA] (ISOFORM 1)</scope>
    <scope>PROTEIN SEQUENCE OF 33-38</scope>
    <scope>TISSUE SPECIFICITY</scope>
    <scope>GLYCOSYLATION</scope>
    <source>
        <tissue>Brain</tissue>
    </source>
</reference>
<reference key="2">
    <citation type="journal article" date="2003" name="Genome Res.">
        <title>The secreted protein discovery initiative (SPDI), a large-scale effort to identify novel human secreted and transmembrane proteins: a bioinformatics assessment.</title>
        <authorList>
            <person name="Clark H.F."/>
            <person name="Gurney A.L."/>
            <person name="Abaya E."/>
            <person name="Baker K."/>
            <person name="Baldwin D.T."/>
            <person name="Brush J."/>
            <person name="Chen J."/>
            <person name="Chow B."/>
            <person name="Chui C."/>
            <person name="Crowley C."/>
            <person name="Currell B."/>
            <person name="Deuel B."/>
            <person name="Dowd P."/>
            <person name="Eaton D."/>
            <person name="Foster J.S."/>
            <person name="Grimaldi C."/>
            <person name="Gu Q."/>
            <person name="Hass P.E."/>
            <person name="Heldens S."/>
            <person name="Huang A."/>
            <person name="Kim H.S."/>
            <person name="Klimowski L."/>
            <person name="Jin Y."/>
            <person name="Johnson S."/>
            <person name="Lee J."/>
            <person name="Lewis L."/>
            <person name="Liao D."/>
            <person name="Mark M.R."/>
            <person name="Robbie E."/>
            <person name="Sanchez C."/>
            <person name="Schoenfeld J."/>
            <person name="Seshagiri S."/>
            <person name="Simmons L."/>
            <person name="Singh J."/>
            <person name="Smith V."/>
            <person name="Stinson J."/>
            <person name="Vagts A."/>
            <person name="Vandlen R.L."/>
            <person name="Watanabe C."/>
            <person name="Wieand D."/>
            <person name="Woods K."/>
            <person name="Xie M.-H."/>
            <person name="Yansura D.G."/>
            <person name="Yi S."/>
            <person name="Yu G."/>
            <person name="Yuan J."/>
            <person name="Zhang M."/>
            <person name="Zhang Z."/>
            <person name="Goddard A.D."/>
            <person name="Wood W.I."/>
            <person name="Godowski P.J."/>
            <person name="Gray A.M."/>
        </authorList>
    </citation>
    <scope>NUCLEOTIDE SEQUENCE [LARGE SCALE MRNA] (ISOFORM 1)</scope>
</reference>
<reference key="3">
    <citation type="journal article" date="2004" name="Genome Res.">
        <title>The status, quality, and expansion of the NIH full-length cDNA project: the Mammalian Gene Collection (MGC).</title>
        <authorList>
            <consortium name="The MGC Project Team"/>
        </authorList>
    </citation>
    <scope>NUCLEOTIDE SEQUENCE [LARGE SCALE MRNA] (ISOFORMS 1 AND 2)</scope>
    <source>
        <tissue>Melanoma</tissue>
        <tissue>Neuroblastoma</tissue>
    </source>
</reference>
<reference key="4">
    <citation type="journal article" date="2003" name="J. Biol. Chem.">
        <title>Endoglycan, a member of the CD34 family, functions as an L-selectin ligand through modification with tyrosine sulfation and sialyl Lewis x.</title>
        <authorList>
            <person name="Fieger C.B."/>
            <person name="Sassetti C.M."/>
            <person name="Rosen S.D."/>
        </authorList>
    </citation>
    <scope>INTERACTION WITH SELL</scope>
    <scope>SUBUNIT</scope>
    <scope>SULFATION AT TYR-97 AND TYR-118</scope>
    <scope>GLYCOSYLATION AT SER-79</scope>
    <scope>SIALIC ACID CONTENT</scope>
    <scope>MUTAGENESIS OF TYR-97; TYR-118 AND THR-124</scope>
</reference>
<reference key="5">
    <citation type="journal article" date="2006" name="Cell">
        <title>Global, in vivo, and site-specific phosphorylation dynamics in signaling networks.</title>
        <authorList>
            <person name="Olsen J.V."/>
            <person name="Blagoev B."/>
            <person name="Gnad F."/>
            <person name="Macek B."/>
            <person name="Kumar C."/>
            <person name="Mortensen P."/>
            <person name="Mann M."/>
        </authorList>
    </citation>
    <scope>PHOSPHORYLATION [LARGE SCALE ANALYSIS] AT SER-596</scope>
    <scope>IDENTIFICATION BY MASS SPECTROMETRY [LARGE SCALE ANALYSIS]</scope>
    <source>
        <tissue>Cervix carcinoma</tissue>
    </source>
</reference>
<reference key="6">
    <citation type="journal article" date="2008" name="J. Immunol.">
        <title>Endoglycan, a member of the CD34 family of sialomucins, is a ligand for the vascular selectins.</title>
        <authorList>
            <person name="Kerr S.C."/>
            <person name="Fieger C.B."/>
            <person name="Snapp K.R."/>
            <person name="Rosen S.D."/>
        </authorList>
    </citation>
    <scope>FUNCTION</scope>
    <scope>INTERACTION WITH SELL; SELE AND SELP</scope>
    <scope>GLYCOSYLATION</scope>
    <scope>TISSUE SPECIFICITY</scope>
</reference>
<reference key="7">
    <citation type="journal article" date="2008" name="Proc. Natl. Acad. Sci. U.S.A.">
        <title>A quantitative atlas of mitotic phosphorylation.</title>
        <authorList>
            <person name="Dephoure N."/>
            <person name="Zhou C."/>
            <person name="Villen J."/>
            <person name="Beausoleil S.A."/>
            <person name="Bakalarski C.E."/>
            <person name="Elledge S.J."/>
            <person name="Gygi S.P."/>
        </authorList>
    </citation>
    <scope>PHOSPHORYLATION [LARGE SCALE ANALYSIS] AT SER-596</scope>
    <scope>IDENTIFICATION BY MASS SPECTROMETRY [LARGE SCALE ANALYSIS]</scope>
    <source>
        <tissue>Cervix carcinoma</tissue>
    </source>
</reference>
<reference key="8">
    <citation type="journal article" date="2010" name="Sci. Signal.">
        <title>Quantitative phosphoproteomics reveals widespread full phosphorylation site occupancy during mitosis.</title>
        <authorList>
            <person name="Olsen J.V."/>
            <person name="Vermeulen M."/>
            <person name="Santamaria A."/>
            <person name="Kumar C."/>
            <person name="Miller M.L."/>
            <person name="Jensen L.J."/>
            <person name="Gnad F."/>
            <person name="Cox J."/>
            <person name="Jensen T.S."/>
            <person name="Nigg E.A."/>
            <person name="Brunak S."/>
            <person name="Mann M."/>
        </authorList>
    </citation>
    <scope>PHOSPHORYLATION [LARGE SCALE ANALYSIS] AT SER-570 AND SER-596</scope>
    <scope>IDENTIFICATION BY MASS SPECTROMETRY [LARGE SCALE ANALYSIS]</scope>
    <source>
        <tissue>Cervix carcinoma</tissue>
    </source>
</reference>
<reference key="9">
    <citation type="journal article" date="2013" name="J. Proteome Res.">
        <title>Toward a comprehensive characterization of a human cancer cell phosphoproteome.</title>
        <authorList>
            <person name="Zhou H."/>
            <person name="Di Palma S."/>
            <person name="Preisinger C."/>
            <person name="Peng M."/>
            <person name="Polat A.N."/>
            <person name="Heck A.J."/>
            <person name="Mohammed S."/>
        </authorList>
    </citation>
    <scope>PHOSPHORYLATION [LARGE SCALE ANALYSIS] AT SER-596</scope>
    <scope>IDENTIFICATION BY MASS SPECTROMETRY [LARGE SCALE ANALYSIS]</scope>
    <source>
        <tissue>Cervix carcinoma</tissue>
        <tissue>Erythroleukemia</tissue>
    </source>
</reference>
<reference key="10">
    <citation type="journal article" date="2013" name="J. Proteome Res.">
        <title>LC-MS/MS characterization of O-glycosylation sites and glycan structures of human cerebrospinal fluid glycoproteins.</title>
        <authorList>
            <person name="Halim A."/>
            <person name="Ruetschi U."/>
            <person name="Larson G."/>
            <person name="Nilsson J."/>
        </authorList>
    </citation>
    <scope>GLYCOSYLATION AT SER-144</scope>
    <scope>IDENTIFICATION BY MASS SPECTROMETRY</scope>
</reference>
<gene>
    <name type="primary">PODXL2</name>
    <name type="ORF">UNQ1861/PRO3742</name>
</gene>
<organism>
    <name type="scientific">Homo sapiens</name>
    <name type="common">Human</name>
    <dbReference type="NCBI Taxonomy" id="9606"/>
    <lineage>
        <taxon>Eukaryota</taxon>
        <taxon>Metazoa</taxon>
        <taxon>Chordata</taxon>
        <taxon>Craniata</taxon>
        <taxon>Vertebrata</taxon>
        <taxon>Euteleostomi</taxon>
        <taxon>Mammalia</taxon>
        <taxon>Eutheria</taxon>
        <taxon>Euarchontoglires</taxon>
        <taxon>Primates</taxon>
        <taxon>Haplorrhini</taxon>
        <taxon>Catarrhini</taxon>
        <taxon>Hominidae</taxon>
        <taxon>Homo</taxon>
    </lineage>
</organism>
<evidence type="ECO:0000255" key="1"/>
<evidence type="ECO:0000256" key="2">
    <source>
        <dbReference type="SAM" id="MobiDB-lite"/>
    </source>
</evidence>
<evidence type="ECO:0000269" key="3">
    <source>
    </source>
</evidence>
<evidence type="ECO:0000269" key="4">
    <source>
    </source>
</evidence>
<evidence type="ECO:0000269" key="5">
    <source>
    </source>
</evidence>
<evidence type="ECO:0000269" key="6">
    <source>
    </source>
</evidence>
<evidence type="ECO:0000303" key="7">
    <source>
    </source>
</evidence>
<evidence type="ECO:0000305" key="8"/>
<evidence type="ECO:0007744" key="9">
    <source>
    </source>
</evidence>
<evidence type="ECO:0007744" key="10">
    <source>
    </source>
</evidence>
<evidence type="ECO:0007744" key="11">
    <source>
    </source>
</evidence>
<evidence type="ECO:0007744" key="12">
    <source>
    </source>
</evidence>